<sequence length="428" mass="48940">MSNVLPKGVFDIFPYVTNSKNLWRNSFLWKTVEHAAHRICNLYGFDEIRTPVFEKTETFLRVGEHSDIVKKEVYTFLDKKGRSLTLRPEGTAAVVRALLDHSADMRKDNKIYYILPMFRYERQQSGRYRQHHQFGLEAIGVRHPLRDAEVLSLLWDFYAAVGLKHMQIQVNFLGGRKTRARYDEALREFFRKDLDKLSTLSQERFHANLLRILDSKEPEDQAFIEQAPSILDYVDDQDLNYFDSVLAELKVLGIPYKINPRLVRGLDYYTDLVFEAVTVVGDHSYALGGGGRYDELVAQSGGPAMPAFGFGVGLERVIQTLLEQGAALPTAPRRLRLIPMDESADAFCFSWAKHLRHLGVATEVDWAHKKPKTALKDAADQQVGFVCFVGEQELSTKQFIVKDMSLHQSFSGAQQDVEQRLVYEVQNA</sequence>
<dbReference type="EC" id="6.1.1.21"/>
<dbReference type="EMBL" id="AE002160">
    <property type="protein sequence ID" value="AAF39630.1"/>
    <property type="molecule type" value="Genomic_DNA"/>
</dbReference>
<dbReference type="PIR" id="F81660">
    <property type="entry name" value="F81660"/>
</dbReference>
<dbReference type="RefSeq" id="WP_010231702.1">
    <property type="nucleotide sequence ID" value="NZ_CP063055.1"/>
</dbReference>
<dbReference type="SMR" id="Q9PJJ9"/>
<dbReference type="GeneID" id="1246198"/>
<dbReference type="KEGG" id="cmu:TC_0830"/>
<dbReference type="eggNOG" id="COG0124">
    <property type="taxonomic scope" value="Bacteria"/>
</dbReference>
<dbReference type="HOGENOM" id="CLU_025113_1_1_0"/>
<dbReference type="OrthoDB" id="9800814at2"/>
<dbReference type="Proteomes" id="UP000000800">
    <property type="component" value="Chromosome"/>
</dbReference>
<dbReference type="GO" id="GO:0005737">
    <property type="term" value="C:cytoplasm"/>
    <property type="evidence" value="ECO:0007669"/>
    <property type="project" value="UniProtKB-SubCell"/>
</dbReference>
<dbReference type="GO" id="GO:0005524">
    <property type="term" value="F:ATP binding"/>
    <property type="evidence" value="ECO:0007669"/>
    <property type="project" value="UniProtKB-UniRule"/>
</dbReference>
<dbReference type="GO" id="GO:0004821">
    <property type="term" value="F:histidine-tRNA ligase activity"/>
    <property type="evidence" value="ECO:0007669"/>
    <property type="project" value="UniProtKB-UniRule"/>
</dbReference>
<dbReference type="GO" id="GO:0006427">
    <property type="term" value="P:histidyl-tRNA aminoacylation"/>
    <property type="evidence" value="ECO:0007669"/>
    <property type="project" value="UniProtKB-UniRule"/>
</dbReference>
<dbReference type="CDD" id="cd00773">
    <property type="entry name" value="HisRS-like_core"/>
    <property type="match status" value="1"/>
</dbReference>
<dbReference type="FunFam" id="3.30.930.10:FF:000166">
    <property type="entry name" value="Histidine--tRNA ligase"/>
    <property type="match status" value="1"/>
</dbReference>
<dbReference type="Gene3D" id="3.40.50.800">
    <property type="entry name" value="Anticodon-binding domain"/>
    <property type="match status" value="1"/>
</dbReference>
<dbReference type="Gene3D" id="3.30.930.10">
    <property type="entry name" value="Bira Bifunctional Protein, Domain 2"/>
    <property type="match status" value="1"/>
</dbReference>
<dbReference type="HAMAP" id="MF_00127">
    <property type="entry name" value="His_tRNA_synth"/>
    <property type="match status" value="1"/>
</dbReference>
<dbReference type="InterPro" id="IPR006195">
    <property type="entry name" value="aa-tRNA-synth_II"/>
</dbReference>
<dbReference type="InterPro" id="IPR045864">
    <property type="entry name" value="aa-tRNA-synth_II/BPL/LPL"/>
</dbReference>
<dbReference type="InterPro" id="IPR004154">
    <property type="entry name" value="Anticodon-bd"/>
</dbReference>
<dbReference type="InterPro" id="IPR036621">
    <property type="entry name" value="Anticodon-bd_dom_sf"/>
</dbReference>
<dbReference type="InterPro" id="IPR015807">
    <property type="entry name" value="His-tRNA-ligase"/>
</dbReference>
<dbReference type="InterPro" id="IPR041715">
    <property type="entry name" value="HisRS-like_core"/>
</dbReference>
<dbReference type="InterPro" id="IPR004516">
    <property type="entry name" value="HisRS/HisZ"/>
</dbReference>
<dbReference type="NCBIfam" id="TIGR00442">
    <property type="entry name" value="hisS"/>
    <property type="match status" value="1"/>
</dbReference>
<dbReference type="PANTHER" id="PTHR43707:SF1">
    <property type="entry name" value="HISTIDINE--TRNA LIGASE, MITOCHONDRIAL-RELATED"/>
    <property type="match status" value="1"/>
</dbReference>
<dbReference type="PANTHER" id="PTHR43707">
    <property type="entry name" value="HISTIDYL-TRNA SYNTHETASE"/>
    <property type="match status" value="1"/>
</dbReference>
<dbReference type="Pfam" id="PF03129">
    <property type="entry name" value="HGTP_anticodon"/>
    <property type="match status" value="1"/>
</dbReference>
<dbReference type="Pfam" id="PF13393">
    <property type="entry name" value="tRNA-synt_His"/>
    <property type="match status" value="1"/>
</dbReference>
<dbReference type="PIRSF" id="PIRSF001549">
    <property type="entry name" value="His-tRNA_synth"/>
    <property type="match status" value="1"/>
</dbReference>
<dbReference type="SUPFAM" id="SSF52954">
    <property type="entry name" value="Class II aaRS ABD-related"/>
    <property type="match status" value="1"/>
</dbReference>
<dbReference type="SUPFAM" id="SSF55681">
    <property type="entry name" value="Class II aaRS and biotin synthetases"/>
    <property type="match status" value="1"/>
</dbReference>
<dbReference type="PROSITE" id="PS50862">
    <property type="entry name" value="AA_TRNA_LIGASE_II"/>
    <property type="match status" value="1"/>
</dbReference>
<gene>
    <name type="primary">hisS</name>
    <name type="ordered locus">TC_0830</name>
</gene>
<accession>Q9PJJ9</accession>
<evidence type="ECO:0000250" key="1"/>
<evidence type="ECO:0000305" key="2"/>
<protein>
    <recommendedName>
        <fullName>Histidine--tRNA ligase</fullName>
        <ecNumber>6.1.1.21</ecNumber>
    </recommendedName>
    <alternativeName>
        <fullName>Histidyl-tRNA synthetase</fullName>
        <shortName>HisRS</shortName>
    </alternativeName>
</protein>
<keyword id="KW-0030">Aminoacyl-tRNA synthetase</keyword>
<keyword id="KW-0067">ATP-binding</keyword>
<keyword id="KW-0963">Cytoplasm</keyword>
<keyword id="KW-0436">Ligase</keyword>
<keyword id="KW-0547">Nucleotide-binding</keyword>
<keyword id="KW-0648">Protein biosynthesis</keyword>
<feature type="chain" id="PRO_0000136134" description="Histidine--tRNA ligase">
    <location>
        <begin position="1"/>
        <end position="428"/>
    </location>
</feature>
<proteinExistence type="inferred from homology"/>
<comment type="catalytic activity">
    <reaction>
        <text>tRNA(His) + L-histidine + ATP = L-histidyl-tRNA(His) + AMP + diphosphate + H(+)</text>
        <dbReference type="Rhea" id="RHEA:17313"/>
        <dbReference type="Rhea" id="RHEA-COMP:9665"/>
        <dbReference type="Rhea" id="RHEA-COMP:9689"/>
        <dbReference type="ChEBI" id="CHEBI:15378"/>
        <dbReference type="ChEBI" id="CHEBI:30616"/>
        <dbReference type="ChEBI" id="CHEBI:33019"/>
        <dbReference type="ChEBI" id="CHEBI:57595"/>
        <dbReference type="ChEBI" id="CHEBI:78442"/>
        <dbReference type="ChEBI" id="CHEBI:78527"/>
        <dbReference type="ChEBI" id="CHEBI:456215"/>
        <dbReference type="EC" id="6.1.1.21"/>
    </reaction>
</comment>
<comment type="subunit">
    <text evidence="1">Homodimer.</text>
</comment>
<comment type="subcellular location">
    <subcellularLocation>
        <location evidence="1">Cytoplasm</location>
    </subcellularLocation>
</comment>
<comment type="similarity">
    <text evidence="2">Belongs to the class-II aminoacyl-tRNA synthetase family.</text>
</comment>
<name>SYH_CHLMU</name>
<reference key="1">
    <citation type="journal article" date="2000" name="Nucleic Acids Res.">
        <title>Genome sequences of Chlamydia trachomatis MoPn and Chlamydia pneumoniae AR39.</title>
        <authorList>
            <person name="Read T.D."/>
            <person name="Brunham R.C."/>
            <person name="Shen C."/>
            <person name="Gill S.R."/>
            <person name="Heidelberg J.F."/>
            <person name="White O."/>
            <person name="Hickey E.K."/>
            <person name="Peterson J.D."/>
            <person name="Utterback T.R."/>
            <person name="Berry K.J."/>
            <person name="Bass S."/>
            <person name="Linher K.D."/>
            <person name="Weidman J.F."/>
            <person name="Khouri H.M."/>
            <person name="Craven B."/>
            <person name="Bowman C."/>
            <person name="Dodson R.J."/>
            <person name="Gwinn M.L."/>
            <person name="Nelson W.C."/>
            <person name="DeBoy R.T."/>
            <person name="Kolonay J.F."/>
            <person name="McClarty G."/>
            <person name="Salzberg S.L."/>
            <person name="Eisen J.A."/>
            <person name="Fraser C.M."/>
        </authorList>
    </citation>
    <scope>NUCLEOTIDE SEQUENCE [LARGE SCALE GENOMIC DNA]</scope>
    <source>
        <strain>MoPn / Nigg</strain>
    </source>
</reference>
<organism>
    <name type="scientific">Chlamydia muridarum (strain MoPn / Nigg)</name>
    <dbReference type="NCBI Taxonomy" id="243161"/>
    <lineage>
        <taxon>Bacteria</taxon>
        <taxon>Pseudomonadati</taxon>
        <taxon>Chlamydiota</taxon>
        <taxon>Chlamydiia</taxon>
        <taxon>Chlamydiales</taxon>
        <taxon>Chlamydiaceae</taxon>
        <taxon>Chlamydia/Chlamydophila group</taxon>
        <taxon>Chlamydia</taxon>
    </lineage>
</organism>